<keyword id="KW-0963">Cytoplasm</keyword>
<keyword id="KW-0413">Isomerase</keyword>
<keyword id="KW-0464">Manganese</keyword>
<keyword id="KW-0479">Metal-binding</keyword>
<keyword id="KW-0684">Rhamnose metabolism</keyword>
<name>RHAA_ECOHS</name>
<comment type="function">
    <text evidence="1">Catalyzes the interconversion of L-rhamnose and L-rhamnulose.</text>
</comment>
<comment type="catalytic activity">
    <reaction evidence="1">
        <text>L-rhamnopyranose = L-rhamnulose</text>
        <dbReference type="Rhea" id="RHEA:23160"/>
        <dbReference type="ChEBI" id="CHEBI:17897"/>
        <dbReference type="ChEBI" id="CHEBI:62346"/>
        <dbReference type="EC" id="5.3.1.14"/>
    </reaction>
</comment>
<comment type="cofactor">
    <cofactor evidence="1">
        <name>Mn(2+)</name>
        <dbReference type="ChEBI" id="CHEBI:29035"/>
    </cofactor>
    <text evidence="1">Binds 1 Mn(2+) ion per subunit.</text>
</comment>
<comment type="pathway">
    <text evidence="1">Carbohydrate degradation; L-rhamnose degradation; glycerone phosphate from L-rhamnose: step 1/3.</text>
</comment>
<comment type="subunit">
    <text evidence="1">Homotetramer.</text>
</comment>
<comment type="subcellular location">
    <subcellularLocation>
        <location evidence="1">Cytoplasm</location>
    </subcellularLocation>
</comment>
<comment type="similarity">
    <text evidence="1">Belongs to the rhamnose isomerase family.</text>
</comment>
<gene>
    <name evidence="1" type="primary">rhaA</name>
    <name type="ordered locus">EcHS_A4132</name>
</gene>
<evidence type="ECO:0000255" key="1">
    <source>
        <dbReference type="HAMAP-Rule" id="MF_00541"/>
    </source>
</evidence>
<reference key="1">
    <citation type="journal article" date="2008" name="J. Bacteriol.">
        <title>The pangenome structure of Escherichia coli: comparative genomic analysis of E. coli commensal and pathogenic isolates.</title>
        <authorList>
            <person name="Rasko D.A."/>
            <person name="Rosovitz M.J."/>
            <person name="Myers G.S.A."/>
            <person name="Mongodin E.F."/>
            <person name="Fricke W.F."/>
            <person name="Gajer P."/>
            <person name="Crabtree J."/>
            <person name="Sebaihia M."/>
            <person name="Thomson N.R."/>
            <person name="Chaudhuri R."/>
            <person name="Henderson I.R."/>
            <person name="Sperandio V."/>
            <person name="Ravel J."/>
        </authorList>
    </citation>
    <scope>NUCLEOTIDE SEQUENCE [LARGE SCALE GENOMIC DNA]</scope>
    <source>
        <strain>HS</strain>
    </source>
</reference>
<feature type="chain" id="PRO_1000061060" description="L-rhamnose isomerase">
    <location>
        <begin position="1"/>
        <end position="419"/>
    </location>
</feature>
<feature type="binding site" evidence="1">
    <location>
        <position position="262"/>
    </location>
    <ligand>
        <name>Mn(2+)</name>
        <dbReference type="ChEBI" id="CHEBI:29035"/>
    </ligand>
</feature>
<feature type="binding site" evidence="1">
    <location>
        <position position="294"/>
    </location>
    <ligand>
        <name>Mn(2+)</name>
        <dbReference type="ChEBI" id="CHEBI:29035"/>
    </ligand>
</feature>
<feature type="binding site" evidence="1">
    <location>
        <position position="296"/>
    </location>
    <ligand>
        <name>Mn(2+)</name>
        <dbReference type="ChEBI" id="CHEBI:29035"/>
    </ligand>
</feature>
<accession>A8A706</accession>
<protein>
    <recommendedName>
        <fullName evidence="1">L-rhamnose isomerase</fullName>
        <ecNumber evidence="1">5.3.1.14</ecNumber>
    </recommendedName>
</protein>
<dbReference type="EC" id="5.3.1.14" evidence="1"/>
<dbReference type="EMBL" id="CP000802">
    <property type="protein sequence ID" value="ABV08310.1"/>
    <property type="molecule type" value="Genomic_DNA"/>
</dbReference>
<dbReference type="RefSeq" id="WP_000211497.1">
    <property type="nucleotide sequence ID" value="NC_009800.1"/>
</dbReference>
<dbReference type="SMR" id="A8A706"/>
<dbReference type="KEGG" id="ecx:EcHS_A4132"/>
<dbReference type="HOGENOM" id="CLU_052790_0_0_6"/>
<dbReference type="UniPathway" id="UPA00541">
    <property type="reaction ID" value="UER00601"/>
</dbReference>
<dbReference type="GO" id="GO:0005737">
    <property type="term" value="C:cytoplasm"/>
    <property type="evidence" value="ECO:0007669"/>
    <property type="project" value="UniProtKB-SubCell"/>
</dbReference>
<dbReference type="GO" id="GO:0008740">
    <property type="term" value="F:L-rhamnose isomerase activity"/>
    <property type="evidence" value="ECO:0007669"/>
    <property type="project" value="UniProtKB-UniRule"/>
</dbReference>
<dbReference type="GO" id="GO:0030145">
    <property type="term" value="F:manganese ion binding"/>
    <property type="evidence" value="ECO:0007669"/>
    <property type="project" value="UniProtKB-UniRule"/>
</dbReference>
<dbReference type="GO" id="GO:0019324">
    <property type="term" value="P:L-lyxose metabolic process"/>
    <property type="evidence" value="ECO:0007669"/>
    <property type="project" value="TreeGrafter"/>
</dbReference>
<dbReference type="GO" id="GO:0019301">
    <property type="term" value="P:rhamnose catabolic process"/>
    <property type="evidence" value="ECO:0007669"/>
    <property type="project" value="UniProtKB-UniRule"/>
</dbReference>
<dbReference type="FunFam" id="3.20.20.150:FF:000006">
    <property type="entry name" value="L-rhamnose isomerase"/>
    <property type="match status" value="1"/>
</dbReference>
<dbReference type="Gene3D" id="3.20.20.150">
    <property type="entry name" value="Divalent-metal-dependent TIM barrel enzymes"/>
    <property type="match status" value="1"/>
</dbReference>
<dbReference type="HAMAP" id="MF_00541">
    <property type="entry name" value="RhaA"/>
    <property type="match status" value="1"/>
</dbReference>
<dbReference type="InterPro" id="IPR050337">
    <property type="entry name" value="L-rhamnose_isomerase"/>
</dbReference>
<dbReference type="InterPro" id="IPR009308">
    <property type="entry name" value="Rhamnose_isomerase"/>
</dbReference>
<dbReference type="InterPro" id="IPR036237">
    <property type="entry name" value="Xyl_isomerase-like_sf"/>
</dbReference>
<dbReference type="NCBIfam" id="NF002203">
    <property type="entry name" value="PRK01076.1"/>
    <property type="match status" value="1"/>
</dbReference>
<dbReference type="NCBIfam" id="TIGR01748">
    <property type="entry name" value="rhaA"/>
    <property type="match status" value="1"/>
</dbReference>
<dbReference type="PANTHER" id="PTHR30268">
    <property type="entry name" value="L-RHAMNOSE ISOMERASE"/>
    <property type="match status" value="1"/>
</dbReference>
<dbReference type="PANTHER" id="PTHR30268:SF0">
    <property type="entry name" value="L-RHAMNOSE ISOMERASE"/>
    <property type="match status" value="1"/>
</dbReference>
<dbReference type="Pfam" id="PF06134">
    <property type="entry name" value="RhaA"/>
    <property type="match status" value="1"/>
</dbReference>
<dbReference type="SUPFAM" id="SSF51658">
    <property type="entry name" value="Xylose isomerase-like"/>
    <property type="match status" value="1"/>
</dbReference>
<proteinExistence type="inferred from homology"/>
<organism>
    <name type="scientific">Escherichia coli O9:H4 (strain HS)</name>
    <dbReference type="NCBI Taxonomy" id="331112"/>
    <lineage>
        <taxon>Bacteria</taxon>
        <taxon>Pseudomonadati</taxon>
        <taxon>Pseudomonadota</taxon>
        <taxon>Gammaproteobacteria</taxon>
        <taxon>Enterobacterales</taxon>
        <taxon>Enterobacteriaceae</taxon>
        <taxon>Escherichia</taxon>
    </lineage>
</organism>
<sequence length="419" mass="47181">MTTQLEQAWELAKQRFAAVGIDVEEALRQLDRLPVSMHCWQGDDVSGFENPEGSLTGGIQATGNYPGKARNASELRADLEQAMRLIPGPKRLNLHAIYLESDTPVSRDQIKPEHFKNWVEWAKANQLGLDFNPSCFSHPLSADGFTLSHADDSIRQFWIDHCKASRRVSAYFGEQLGTPSVMNIWIPDGMKDITVDRLAPRQRLLAALDEVISEKLNPAHHIDAVESKLFGIGAESYTVGSNEFYLGYATSRQTALCLDAGHFHPTEVISDKISAAMLYVPQLLLHVSRPVRWDSDHVVLLDDETQAIASEIVRHDLFDRVHIGLDFFDASINRIAAWVIGTRNMKKALLRALLEPTAELRKLEAAGDYTARLALLEEQKSLPWQAVWEMYCQRHDTPAGSEWLESVRAYEKEILSRRG</sequence>